<proteinExistence type="evidence at protein level"/>
<accession>P07149</accession>
<accession>D6VX19</accession>
<accession>Q05747</accession>
<dbReference type="EC" id="2.3.1.86"/>
<dbReference type="EC" id="4.2.1.59"/>
<dbReference type="EC" id="1.3.1.9"/>
<dbReference type="EC" id="2.3.1.38"/>
<dbReference type="EC" id="2.3.1.39"/>
<dbReference type="EC" id="3.1.2.14"/>
<dbReference type="EMBL" id="M30162">
    <property type="protein sequence ID" value="AAB59310.1"/>
    <property type="molecule type" value="Genomic_DNA"/>
</dbReference>
<dbReference type="EMBL" id="X74151">
    <property type="protein sequence ID" value="CAA52256.1"/>
    <property type="molecule type" value="Genomic_DNA"/>
</dbReference>
<dbReference type="EMBL" id="Z28182">
    <property type="protein sequence ID" value="CAA82025.1"/>
    <property type="molecule type" value="Genomic_DNA"/>
</dbReference>
<dbReference type="EMBL" id="X03977">
    <property type="protein sequence ID" value="CAA27616.1"/>
    <property type="status" value="ALT_FRAME"/>
    <property type="molecule type" value="Genomic_DNA"/>
</dbReference>
<dbReference type="EMBL" id="M31034">
    <property type="protein sequence ID" value="AAA34602.1"/>
    <property type="molecule type" value="Genomic_DNA"/>
</dbReference>
<dbReference type="EMBL" id="X70069">
    <property type="protein sequence ID" value="CAA49673.1"/>
    <property type="molecule type" value="Genomic_DNA"/>
</dbReference>
<dbReference type="EMBL" id="BK006944">
    <property type="protein sequence ID" value="DAA08985.1"/>
    <property type="molecule type" value="Genomic_DNA"/>
</dbReference>
<dbReference type="PIR" id="S34688">
    <property type="entry name" value="S34688"/>
</dbReference>
<dbReference type="RefSeq" id="NP_012739.1">
    <property type="nucleotide sequence ID" value="NM_001179748.1"/>
</dbReference>
<dbReference type="PDB" id="2PFF">
    <property type="method" value="X-ray"/>
    <property type="resolution" value="4.00 A"/>
    <property type="chains" value="B/E/H=1-545, B/E/H=1669-1940"/>
</dbReference>
<dbReference type="PDB" id="2UV8">
    <property type="method" value="X-ray"/>
    <property type="resolution" value="3.10 A"/>
    <property type="chains" value="G/H/I=1-2051"/>
</dbReference>
<dbReference type="PDB" id="2VKZ">
    <property type="method" value="X-ray"/>
    <property type="resolution" value="4.00 A"/>
    <property type="chains" value="G/H/I=1-2051"/>
</dbReference>
<dbReference type="PDB" id="3HMJ">
    <property type="method" value="X-ray"/>
    <property type="resolution" value="4.00 A"/>
    <property type="chains" value="G/H/I=1-2051"/>
</dbReference>
<dbReference type="PDB" id="6JSH">
    <property type="method" value="EM"/>
    <property type="resolution" value="5.10 A"/>
    <property type="chains" value="B/F/G=1-2051"/>
</dbReference>
<dbReference type="PDB" id="6JSI">
    <property type="method" value="EM"/>
    <property type="resolution" value="4.70 A"/>
    <property type="chains" value="B/F/G=1-2051"/>
</dbReference>
<dbReference type="PDB" id="6QL5">
    <property type="method" value="EM"/>
    <property type="resolution" value="2.80 A"/>
    <property type="chains" value="G/H/I/J/K/L=5-2050"/>
</dbReference>
<dbReference type="PDB" id="6QL6">
    <property type="method" value="EM"/>
    <property type="resolution" value="2.90 A"/>
    <property type="chains" value="G/H/I/J/K/L=5-2050"/>
</dbReference>
<dbReference type="PDB" id="6QL7">
    <property type="method" value="X-ray"/>
    <property type="resolution" value="4.60 A"/>
    <property type="chains" value="G/H/I/J/K/L/g/h/i/j/k/l=1-2051"/>
</dbReference>
<dbReference type="PDB" id="6QL9">
    <property type="method" value="X-ray"/>
    <property type="resolution" value="2.82 A"/>
    <property type="chains" value="G/H/I/J/K/L=1-2051"/>
</dbReference>
<dbReference type="PDB" id="6TA1">
    <property type="method" value="EM"/>
    <property type="resolution" value="3.10 A"/>
    <property type="chains" value="C/E/G/H/J/L=1-2051"/>
</dbReference>
<dbReference type="PDB" id="6U5T">
    <property type="method" value="EM"/>
    <property type="resolution" value="2.90 A"/>
    <property type="chains" value="G=1-2051"/>
</dbReference>
<dbReference type="PDB" id="6U5U">
    <property type="method" value="EM"/>
    <property type="resolution" value="2.80 A"/>
    <property type="chains" value="G=1-2051"/>
</dbReference>
<dbReference type="PDB" id="6WC7">
    <property type="method" value="EM"/>
    <property type="resolution" value="5.80 A"/>
    <property type="chains" value="G=1-2051"/>
</dbReference>
<dbReference type="PDB" id="8PRV">
    <property type="method" value="EM"/>
    <property type="resolution" value="2.90 A"/>
    <property type="chains" value="G=1-2051"/>
</dbReference>
<dbReference type="PDB" id="8PRW">
    <property type="method" value="EM"/>
    <property type="resolution" value="1.90 A"/>
    <property type="chains" value="G/H/I/J/K/L=1-2051"/>
</dbReference>
<dbReference type="PDB" id="8PS1">
    <property type="method" value="EM"/>
    <property type="resolution" value="2.80 A"/>
    <property type="chains" value="G=1-2051"/>
</dbReference>
<dbReference type="PDB" id="8PS2">
    <property type="method" value="EM"/>
    <property type="resolution" value="2.90 A"/>
    <property type="chains" value="G=1-2051"/>
</dbReference>
<dbReference type="PDB" id="8PS8">
    <property type="method" value="EM"/>
    <property type="resolution" value="4.00 A"/>
    <property type="chains" value="G=1-2051"/>
</dbReference>
<dbReference type="PDB" id="8PS9">
    <property type="method" value="EM"/>
    <property type="resolution" value="2.90 A"/>
    <property type="chains" value="G=1-2051"/>
</dbReference>
<dbReference type="PDB" id="8PSA">
    <property type="method" value="EM"/>
    <property type="resolution" value="3.60 A"/>
    <property type="chains" value="G=1-2051"/>
</dbReference>
<dbReference type="PDB" id="8PSF">
    <property type="method" value="EM"/>
    <property type="resolution" value="2.80 A"/>
    <property type="chains" value="G=1-2051"/>
</dbReference>
<dbReference type="PDB" id="8PSG">
    <property type="method" value="EM"/>
    <property type="resolution" value="3.70 A"/>
    <property type="chains" value="G=1-2051"/>
</dbReference>
<dbReference type="PDB" id="8PSJ">
    <property type="method" value="EM"/>
    <property type="resolution" value="3.40 A"/>
    <property type="chains" value="G=1-2051"/>
</dbReference>
<dbReference type="PDB" id="8PSK">
    <property type="method" value="EM"/>
    <property type="resolution" value="2.80 A"/>
    <property type="chains" value="G=1-2051"/>
</dbReference>
<dbReference type="PDB" id="8PSL">
    <property type="method" value="EM"/>
    <property type="resolution" value="3.70 A"/>
    <property type="chains" value="G=1-2051"/>
</dbReference>
<dbReference type="PDB" id="8PSM">
    <property type="method" value="EM"/>
    <property type="resolution" value="3.10 A"/>
    <property type="chains" value="G=1-2051"/>
</dbReference>
<dbReference type="PDB" id="8PSP">
    <property type="method" value="EM"/>
    <property type="resolution" value="2.90 A"/>
    <property type="chains" value="G=1-2051"/>
</dbReference>
<dbReference type="PDBsum" id="2PFF"/>
<dbReference type="PDBsum" id="2UV8"/>
<dbReference type="PDBsum" id="2VKZ"/>
<dbReference type="PDBsum" id="3HMJ"/>
<dbReference type="PDBsum" id="6JSH"/>
<dbReference type="PDBsum" id="6JSI"/>
<dbReference type="PDBsum" id="6QL5"/>
<dbReference type="PDBsum" id="6QL6"/>
<dbReference type="PDBsum" id="6QL7"/>
<dbReference type="PDBsum" id="6QL9"/>
<dbReference type="PDBsum" id="6TA1"/>
<dbReference type="PDBsum" id="6U5T"/>
<dbReference type="PDBsum" id="6U5U"/>
<dbReference type="PDBsum" id="6WC7"/>
<dbReference type="PDBsum" id="8PRV"/>
<dbReference type="PDBsum" id="8PRW"/>
<dbReference type="PDBsum" id="8PS1"/>
<dbReference type="PDBsum" id="8PS2"/>
<dbReference type="PDBsum" id="8PS8"/>
<dbReference type="PDBsum" id="8PS9"/>
<dbReference type="PDBsum" id="8PSA"/>
<dbReference type="PDBsum" id="8PSF"/>
<dbReference type="PDBsum" id="8PSG"/>
<dbReference type="PDBsum" id="8PSJ"/>
<dbReference type="PDBsum" id="8PSK"/>
<dbReference type="PDBsum" id="8PSL"/>
<dbReference type="PDBsum" id="8PSM"/>
<dbReference type="PDBsum" id="8PSP"/>
<dbReference type="EMDB" id="EMD-10420"/>
<dbReference type="EMDB" id="EMD-17839"/>
<dbReference type="EMDB" id="EMD-17840"/>
<dbReference type="EMDB" id="EMD-17842"/>
<dbReference type="EMDB" id="EMD-17843"/>
<dbReference type="EMDB" id="EMD-17846"/>
<dbReference type="EMDB" id="EMD-17847"/>
<dbReference type="EMDB" id="EMD-17848"/>
<dbReference type="EMDB" id="EMD-17851"/>
<dbReference type="EMDB" id="EMD-17852"/>
<dbReference type="EMDB" id="EMD-17853"/>
<dbReference type="EMDB" id="EMD-17854"/>
<dbReference type="EMDB" id="EMD-17855"/>
<dbReference type="EMDB" id="EMD-17856"/>
<dbReference type="EMDB" id="EMD-17859"/>
<dbReference type="EMDB" id="EMD-19477"/>
<dbReference type="EMDB" id="EMD-20655"/>
<dbReference type="EMDB" id="EMD-20656"/>
<dbReference type="EMDB" id="EMD-21602"/>
<dbReference type="EMDB" id="EMD-4577"/>
<dbReference type="EMDB" id="EMD-4578"/>
<dbReference type="EMDB" id="EMD-9881"/>
<dbReference type="EMDB" id="EMD-9882"/>
<dbReference type="SMR" id="P07149"/>
<dbReference type="BioGRID" id="33940">
    <property type="interactions" value="146"/>
</dbReference>
<dbReference type="ComplexPortal" id="CPX-1162">
    <property type="entry name" value="Fatty-acyl-CoA synthase"/>
</dbReference>
<dbReference type="DIP" id="DIP-742N"/>
<dbReference type="FunCoup" id="P07149">
    <property type="interactions" value="837"/>
</dbReference>
<dbReference type="IntAct" id="P07149">
    <property type="interactions" value="105"/>
</dbReference>
<dbReference type="MINT" id="P07149"/>
<dbReference type="STRING" id="4932.YKL182W"/>
<dbReference type="CarbonylDB" id="P07149"/>
<dbReference type="iPTMnet" id="P07149"/>
<dbReference type="PaxDb" id="4932-YKL182W"/>
<dbReference type="PeptideAtlas" id="P07149"/>
<dbReference type="EnsemblFungi" id="YKL182W_mRNA">
    <property type="protein sequence ID" value="YKL182W"/>
    <property type="gene ID" value="YKL182W"/>
</dbReference>
<dbReference type="GeneID" id="853653"/>
<dbReference type="KEGG" id="sce:YKL182W"/>
<dbReference type="AGR" id="SGD:S000001665"/>
<dbReference type="SGD" id="S000001665">
    <property type="gene designation" value="FAS1"/>
</dbReference>
<dbReference type="VEuPathDB" id="FungiDB:YKL182W"/>
<dbReference type="eggNOG" id="ENOG502QQJX">
    <property type="taxonomic scope" value="Eukaryota"/>
</dbReference>
<dbReference type="GeneTree" id="ENSGT00940000176444"/>
<dbReference type="HOGENOM" id="CLU_000114_5_0_1"/>
<dbReference type="InParanoid" id="P07149"/>
<dbReference type="OMA" id="HFMDNYG"/>
<dbReference type="OrthoDB" id="5417908at2759"/>
<dbReference type="BioCyc" id="MetaCyc:YKL182W-MONOMER"/>
<dbReference type="BioCyc" id="YEAST:YKL182W-MONOMER"/>
<dbReference type="BRENDA" id="2.3.1.86">
    <property type="organism ID" value="984"/>
</dbReference>
<dbReference type="SABIO-RK" id="P07149"/>
<dbReference type="BioGRID-ORCS" id="853653">
    <property type="hits" value="0 hits in 10 CRISPR screens"/>
</dbReference>
<dbReference type="EvolutionaryTrace" id="P07149"/>
<dbReference type="PRO" id="PR:P07149"/>
<dbReference type="Proteomes" id="UP000002311">
    <property type="component" value="Chromosome XI"/>
</dbReference>
<dbReference type="RNAct" id="P07149">
    <property type="molecule type" value="protein"/>
</dbReference>
<dbReference type="GO" id="GO:0005737">
    <property type="term" value="C:cytoplasm"/>
    <property type="evidence" value="ECO:0007005"/>
    <property type="project" value="SGD"/>
</dbReference>
<dbReference type="GO" id="GO:0005829">
    <property type="term" value="C:cytosol"/>
    <property type="evidence" value="ECO:0000314"/>
    <property type="project" value="SGD"/>
</dbReference>
<dbReference type="GO" id="GO:0005835">
    <property type="term" value="C:fatty acid synthase complex"/>
    <property type="evidence" value="ECO:0000314"/>
    <property type="project" value="SGD"/>
</dbReference>
<dbReference type="GO" id="GO:0005811">
    <property type="term" value="C:lipid droplet"/>
    <property type="evidence" value="ECO:0000314"/>
    <property type="project" value="SGD"/>
</dbReference>
<dbReference type="GO" id="GO:0005739">
    <property type="term" value="C:mitochondrion"/>
    <property type="evidence" value="ECO:0007005"/>
    <property type="project" value="SGD"/>
</dbReference>
<dbReference type="GO" id="GO:0019171">
    <property type="term" value="F:(3R)-hydroxyacyl-[acyl-carrier-protein] dehydratase activity"/>
    <property type="evidence" value="ECO:0000314"/>
    <property type="project" value="SGD"/>
</dbReference>
<dbReference type="GO" id="GO:0004313">
    <property type="term" value="F:[acyl-carrier-protein] S-acetyltransferase activity"/>
    <property type="evidence" value="ECO:0000314"/>
    <property type="project" value="SGD"/>
</dbReference>
<dbReference type="GO" id="GO:0004314">
    <property type="term" value="F:[acyl-carrier-protein] S-malonyltransferase activity"/>
    <property type="evidence" value="ECO:0000314"/>
    <property type="project" value="SGD"/>
</dbReference>
<dbReference type="GO" id="GO:0004318">
    <property type="term" value="F:enoyl-[acyl-carrier-protein] reductase (NADH) activity"/>
    <property type="evidence" value="ECO:0007669"/>
    <property type="project" value="UniProtKB-EC"/>
</dbReference>
<dbReference type="GO" id="GO:0141148">
    <property type="term" value="F:enoyl-[acyl-carrier-protein] reductase (NADPH) activity"/>
    <property type="evidence" value="ECO:0000314"/>
    <property type="project" value="SGD"/>
</dbReference>
<dbReference type="GO" id="GO:0004312">
    <property type="term" value="F:fatty acid synthase activity"/>
    <property type="evidence" value="ECO:0007669"/>
    <property type="project" value="InterPro"/>
</dbReference>
<dbReference type="GO" id="GO:0016297">
    <property type="term" value="F:fatty acyl-[ACP] hydrolase activity"/>
    <property type="evidence" value="ECO:0007669"/>
    <property type="project" value="UniProtKB-EC"/>
</dbReference>
<dbReference type="GO" id="GO:0004321">
    <property type="term" value="F:fatty-acyl-CoA synthase activity"/>
    <property type="evidence" value="ECO:0007669"/>
    <property type="project" value="UniProtKB-EC"/>
</dbReference>
<dbReference type="GO" id="GO:0016409">
    <property type="term" value="F:palmitoyltransferase activity"/>
    <property type="evidence" value="ECO:0000314"/>
    <property type="project" value="SGD"/>
</dbReference>
<dbReference type="GO" id="GO:0042759">
    <property type="term" value="P:long-chain fatty acid biosynthetic process"/>
    <property type="evidence" value="ECO:0000315"/>
    <property type="project" value="SGD"/>
</dbReference>
<dbReference type="CDD" id="cd03447">
    <property type="entry name" value="FAS_MaoC"/>
    <property type="match status" value="1"/>
</dbReference>
<dbReference type="FunFam" id="1.20.1050.120:FF:000001">
    <property type="entry name" value="Fatty acid synthase beta subunit dehydratase"/>
    <property type="match status" value="1"/>
</dbReference>
<dbReference type="FunFam" id="1.20.930.70:FF:000001">
    <property type="entry name" value="Fatty acid synthase beta subunit dehydratase"/>
    <property type="match status" value="1"/>
</dbReference>
<dbReference type="FunFam" id="3.10.129.10:FF:000017">
    <property type="entry name" value="Fatty acid synthase beta subunit dehydratase"/>
    <property type="match status" value="1"/>
</dbReference>
<dbReference type="FunFam" id="3.20.20.70:FF:000078">
    <property type="entry name" value="Fatty acid synthase beta subunit dehydratase"/>
    <property type="match status" value="1"/>
</dbReference>
<dbReference type="FunFam" id="3.30.1120.100:FF:000001">
    <property type="entry name" value="Fatty acid synthase beta subunit dehydratase"/>
    <property type="match status" value="1"/>
</dbReference>
<dbReference type="FunFam" id="3.40.366.10:FF:000006">
    <property type="entry name" value="Fatty acid synthase beta subunit dehydratase"/>
    <property type="match status" value="1"/>
</dbReference>
<dbReference type="FunFam" id="3.40.366.10:FF:000007">
    <property type="entry name" value="Fatty acid synthase beta subunit dehydratase"/>
    <property type="match status" value="1"/>
</dbReference>
<dbReference type="FunFam" id="3.10.129.10:FF:000015">
    <property type="entry name" value="Fatty acid synthase subunit beta"/>
    <property type="match status" value="1"/>
</dbReference>
<dbReference type="FunFam" id="3.20.20.70:FF:000169">
    <property type="entry name" value="Fatty acid synthase subunit beta"/>
    <property type="match status" value="1"/>
</dbReference>
<dbReference type="FunFam" id="3.30.70.3330:FF:000001">
    <property type="entry name" value="Fatty acid synthase subunit beta dehydratase"/>
    <property type="match status" value="1"/>
</dbReference>
<dbReference type="Gene3D" id="1.20.1050.120">
    <property type="match status" value="1"/>
</dbReference>
<dbReference type="Gene3D" id="1.20.930.70">
    <property type="match status" value="1"/>
</dbReference>
<dbReference type="Gene3D" id="3.30.1120.100">
    <property type="match status" value="1"/>
</dbReference>
<dbReference type="Gene3D" id="3.30.70.3330">
    <property type="match status" value="1"/>
</dbReference>
<dbReference type="Gene3D" id="6.10.140.1400">
    <property type="match status" value="1"/>
</dbReference>
<dbReference type="Gene3D" id="6.10.60.10">
    <property type="match status" value="1"/>
</dbReference>
<dbReference type="Gene3D" id="6.20.240.10">
    <property type="match status" value="1"/>
</dbReference>
<dbReference type="Gene3D" id="3.20.20.70">
    <property type="entry name" value="Aldolase class I"/>
    <property type="match status" value="2"/>
</dbReference>
<dbReference type="Gene3D" id="3.10.129.10">
    <property type="entry name" value="Hotdog Thioesterase"/>
    <property type="match status" value="2"/>
</dbReference>
<dbReference type="Gene3D" id="3.40.366.10">
    <property type="entry name" value="Malonyl-Coenzyme A Acyl Carrier Protein, domain 2"/>
    <property type="match status" value="3"/>
</dbReference>
<dbReference type="InterPro" id="IPR001227">
    <property type="entry name" value="Ac_transferase_dom_sf"/>
</dbReference>
<dbReference type="InterPro" id="IPR014043">
    <property type="entry name" value="Acyl_transferase_dom"/>
</dbReference>
<dbReference type="InterPro" id="IPR016035">
    <property type="entry name" value="Acyl_Trfase/lysoPLipase"/>
</dbReference>
<dbReference type="InterPro" id="IPR013785">
    <property type="entry name" value="Aldolase_TIM"/>
</dbReference>
<dbReference type="InterPro" id="IPR039569">
    <property type="entry name" value="FAS1-like_DH_region"/>
</dbReference>
<dbReference type="InterPro" id="IPR016452">
    <property type="entry name" value="Fas1/AflB-like"/>
</dbReference>
<dbReference type="InterPro" id="IPR013565">
    <property type="entry name" value="Fas1/AflB-like_central"/>
</dbReference>
<dbReference type="InterPro" id="IPR041099">
    <property type="entry name" value="FAS1_N"/>
</dbReference>
<dbReference type="InterPro" id="IPR040883">
    <property type="entry name" value="FAS_meander"/>
</dbReference>
<dbReference type="InterPro" id="IPR003965">
    <property type="entry name" value="Fatty_acid_synthase"/>
</dbReference>
<dbReference type="InterPro" id="IPR050830">
    <property type="entry name" value="Fungal_FAS"/>
</dbReference>
<dbReference type="InterPro" id="IPR029069">
    <property type="entry name" value="HotDog_dom_sf"/>
</dbReference>
<dbReference type="InterPro" id="IPR002539">
    <property type="entry name" value="MaoC-like_dom"/>
</dbReference>
<dbReference type="InterPro" id="IPR032088">
    <property type="entry name" value="SAT"/>
</dbReference>
<dbReference type="PANTHER" id="PTHR10982:SF21">
    <property type="entry name" value="FATTY ACID SYNTHASE SUBUNIT BETA"/>
    <property type="match status" value="1"/>
</dbReference>
<dbReference type="PANTHER" id="PTHR10982">
    <property type="entry name" value="MALONYL COA-ACYL CARRIER PROTEIN TRANSACYLASE"/>
    <property type="match status" value="1"/>
</dbReference>
<dbReference type="Pfam" id="PF00698">
    <property type="entry name" value="Acyl_transf_1"/>
    <property type="match status" value="1"/>
</dbReference>
<dbReference type="Pfam" id="PF08354">
    <property type="entry name" value="Fas1-AflB-like_hel"/>
    <property type="match status" value="1"/>
</dbReference>
<dbReference type="Pfam" id="PF13452">
    <property type="entry name" value="FAS1_DH_region"/>
    <property type="match status" value="1"/>
</dbReference>
<dbReference type="Pfam" id="PF22235">
    <property type="entry name" value="FAS1_thioest_ins"/>
    <property type="match status" value="1"/>
</dbReference>
<dbReference type="Pfam" id="PF17951">
    <property type="entry name" value="FAS_meander"/>
    <property type="match status" value="1"/>
</dbReference>
<dbReference type="Pfam" id="PF17828">
    <property type="entry name" value="FAS_N"/>
    <property type="match status" value="1"/>
</dbReference>
<dbReference type="Pfam" id="PF01575">
    <property type="entry name" value="MaoC_dehydratas"/>
    <property type="match status" value="1"/>
</dbReference>
<dbReference type="Pfam" id="PF16073">
    <property type="entry name" value="SAT"/>
    <property type="match status" value="1"/>
</dbReference>
<dbReference type="PIRSF" id="PIRSF005562">
    <property type="entry name" value="FAS_yeast_beta"/>
    <property type="match status" value="1"/>
</dbReference>
<dbReference type="PRINTS" id="PR01483">
    <property type="entry name" value="FASYNTHASE"/>
</dbReference>
<dbReference type="SMART" id="SM00827">
    <property type="entry name" value="PKS_AT"/>
    <property type="match status" value="1"/>
</dbReference>
<dbReference type="SUPFAM" id="SSF52151">
    <property type="entry name" value="FabD/lysophospholipase-like"/>
    <property type="match status" value="2"/>
</dbReference>
<dbReference type="SUPFAM" id="SSF54637">
    <property type="entry name" value="Thioesterase/thiol ester dehydrase-isomerase"/>
    <property type="match status" value="2"/>
</dbReference>
<organism>
    <name type="scientific">Saccharomyces cerevisiae (strain ATCC 204508 / S288c)</name>
    <name type="common">Baker's yeast</name>
    <dbReference type="NCBI Taxonomy" id="559292"/>
    <lineage>
        <taxon>Eukaryota</taxon>
        <taxon>Fungi</taxon>
        <taxon>Dikarya</taxon>
        <taxon>Ascomycota</taxon>
        <taxon>Saccharomycotina</taxon>
        <taxon>Saccharomycetes</taxon>
        <taxon>Saccharomycetales</taxon>
        <taxon>Saccharomycetaceae</taxon>
        <taxon>Saccharomyces</taxon>
    </lineage>
</organism>
<protein>
    <recommendedName>
        <fullName>Fatty acid synthase subunit beta</fullName>
        <ecNumber>2.3.1.86</ecNumber>
    </recommendedName>
    <domain>
        <recommendedName>
            <fullName>3-hydroxyacyl-[acyl-carrier-protein] dehydratase</fullName>
            <ecNumber>4.2.1.59</ecNumber>
        </recommendedName>
    </domain>
    <domain>
        <recommendedName>
            <fullName>Enoyl-[acyl-carrier-protein] reductase [NADH]</fullName>
            <ecNumber>1.3.1.9</ecNumber>
        </recommendedName>
    </domain>
    <domain>
        <recommendedName>
            <fullName>[Acyl-carrier-protein] acetyltransferase</fullName>
            <ecNumber>2.3.1.38</ecNumber>
        </recommendedName>
    </domain>
    <domain>
        <recommendedName>
            <fullName>[Acyl-carrier-protein] malonyltransferase</fullName>
            <ecNumber>2.3.1.39</ecNumber>
        </recommendedName>
    </domain>
    <domain>
        <recommendedName>
            <fullName>S-acyl fatty acid synthase thioesterase</fullName>
            <ecNumber>3.1.2.14</ecNumber>
        </recommendedName>
    </domain>
</protein>
<name>FAS1_YEAST</name>
<sequence>MDAYSTRPLTLSHGSLEHVLLVPTASFFIASQLQEQFNKILPEPTEGFAADDEPTTPAELVGKFLGYVSSLVEPSKVGQFDQVLNLCLTEFENCYLEGNDIHALAAKLLQENDTTLVKTKELIKNYITARIMAKRPFDKKSNSALFRAVGEGNAQLVAIFGGQGNTDDYFEELRDLYQTYHVLVGDLIKFSAETLSELIRTTLDAEKVFTQGLNILEWLENPSNTPDKDYLLSIPISCPLIGVIQLAHYVVTAKLLGFTPGELRSYLKGATGHSQGLVTAVAIAETDSWESFFVSVRKAITVLFFIGVRCYEAYPNTSLPPSILEDSLENNEGVPSPMLSISNLTQEQVQDYVNKTNSHLPAGKQVEISLVNGAKNLVVSGPPQSLYGLNLTLRKAKAPSGLDQSRIPFSERKLKFSNRFLPVASPFHSHLLVPASDLINKDLVKNNVSFNAKDIQIPVYDTFDGSDLRVLSGSISERIVDCIIRLPVKWETTTQFKATHILDFGPGGASGLGVLTHRNKDGTGVRVIVAGTLDINPDDDYGFKQEIFDVTSNGLKKNPNWLEEYHPKLIKNKSGKIFVETKFSKLIGRPPLLVPGMTPCTVSPDFVAATTNAGYTIELAGGGYFSAAGMTAAIDSVVSQIEKGSTFGINLIYVNPFMLQWGIPLIKELRSKGYPIQFLTIGAGVPSLEVASEYIETLGLKYLGLKPGSIDAISQVINIAKAHPNFPIALQWTGGRGGGHHSFEDAHTPMLQMYSKIRRHPNIMLIFGSGFGSADDTYPYLTGEWSTKFDYPPMPFDGFLFGSRVMIAKEVKTSPDAKKCIAACTGVPDDKWEQTYKKPTGGIVTVRSEMGEPIHKIATRGVMLWKEFDETIFNLPKNKLVPTLEAKRDYIISRLNADFQKPWFATVNGQARDLATMTYEEVAKRLVELMFIRSTNSWFDVTWRTFTGDFLRRVEERFTKSKTLSLIQSYSLLDKPDEAIEKVFNAYPAAREQFLNAQDIDHFLSMCQNPMQKPVPFVPVLDRRFEIFFKKDSLWQSEHLEAVVDQDVQRTCILHGPVAAQFTKVIDEPIKSIMDGIHDGHIKKLLHQYYGDDESKIPAVEYFGGESPVDVQSQVDSSSVSEDSAVFKATSSTDEESWFKALAGSEINWRHASFLCSFITQDKMFVSNPIRKVFKPSQGMVVEISNGNTSSKTVVTLSEPVQGELKPTVILKLLKENIIQMEMIENRTMDGKPVSLPLLYNFNPDNGFAPISEVMEDRNQRIKEMYWKLWIDEPFNLDFDPRDVIKGKDFEITAKEVYDFTHAVGNNCEDFVSRPDRTMLAPMDFAIVVGWRAIIKAIFPNTVDGDLLKLVHLSNGYKMIPGAKPLQVGDVVSTTAVIESVVNQPTGKIVDVVGTLSRNGKPVMEVTSSFFYRGNYTDFENTFQKTVEPVYQMHIKTSKDIAVLRSKEWFQLDDEDFDLLNKTLTFETETEVTFKNANIFSSVKCFGPIKVELPTKETVEIGIVDYEAGASHGNPVVDFLKRNGSTLEQKVNLENPIPIAVLDSYTPSTNEPYARVSGDLNPIHVSRHFASYANLPGTITHGMFSSASVRALIENWAADSVSSRVRGYTCQFVDMVLPNTALKTSIQHVGMINGRKLIKFETRNEDDVVVLTGEAEIEQPVTTFVFTGQGSQEQGMGMDLYKTSKAAQDVWNRADNHFKDTYGFSILDIVINNPVNLTIHFGGEKGKRIRENYSAMIFETIVDGKLKTEKIFKEINEHSTSYTFRSEKGLLSATQFTQPALTLMEKAAFEDLKSKGLIPADATFAGHSLGEYAALASLADVMSIESLVEVVFYRGMTMQVAVPRDELGRSNYGMIAINPGRVAASFSQEALQYVVERVGKRTGWLVEIVNYNVENQQYVAAGDLRALDTVTNVLNFIKLQKIDIIELQKSLSLEEVEGHLFEIIDEASKKSAVKPRPLKLERGFACIPLVGISVPFHSTYLMNGVKPFKSFLKKNIIKENVKVARLAGKYIPNLTAKPFQVTKEYFQDVYDLTGSEPIKEIIDNWEKYEQS</sequence>
<gene>
    <name type="primary">FAS1</name>
    <name type="ordered locus">YKL182W</name>
</gene>
<comment type="function">
    <text>Fatty acid synthetase catalyzes the formation of long-chain fatty acids from acetyl-CoA, malonyl-CoA and NADPH. The beta subunit contains domains for: [acyl-carrier-protein] acetyltransferase and malonyltransferase, S-acyl fatty acid synthase thioesterase, enoyl-[acyl-carrier-protein] reductase, and 3-hydroxypalmitoyl-[acyl-carrier-protein] dehydratase.</text>
</comment>
<comment type="catalytic activity">
    <reaction>
        <text>acetyl-CoA + n malonyl-CoA + 2n NADPH + 4n H(+) = a long-chain-acyl-CoA + n CoA + n CO2 + 2n NADP(+).</text>
        <dbReference type="EC" id="2.3.1.86"/>
    </reaction>
</comment>
<comment type="catalytic activity">
    <reaction>
        <text>holo-[ACP] + acetyl-CoA = acetyl-[ACP] + CoA</text>
        <dbReference type="Rhea" id="RHEA:41788"/>
        <dbReference type="Rhea" id="RHEA-COMP:9621"/>
        <dbReference type="Rhea" id="RHEA-COMP:9685"/>
        <dbReference type="ChEBI" id="CHEBI:57287"/>
        <dbReference type="ChEBI" id="CHEBI:57288"/>
        <dbReference type="ChEBI" id="CHEBI:64479"/>
        <dbReference type="ChEBI" id="CHEBI:78446"/>
        <dbReference type="EC" id="2.3.1.38"/>
    </reaction>
</comment>
<comment type="catalytic activity">
    <reaction>
        <text>holo-[ACP] + malonyl-CoA = malonyl-[ACP] + CoA</text>
        <dbReference type="Rhea" id="RHEA:41792"/>
        <dbReference type="Rhea" id="RHEA-COMP:9623"/>
        <dbReference type="Rhea" id="RHEA-COMP:9685"/>
        <dbReference type="ChEBI" id="CHEBI:57287"/>
        <dbReference type="ChEBI" id="CHEBI:57384"/>
        <dbReference type="ChEBI" id="CHEBI:64479"/>
        <dbReference type="ChEBI" id="CHEBI:78449"/>
        <dbReference type="EC" id="2.3.1.39"/>
    </reaction>
</comment>
<comment type="catalytic activity">
    <reaction>
        <text>a (3R)-hydroxyacyl-[ACP] = a (2E)-enoyl-[ACP] + H2O</text>
        <dbReference type="Rhea" id="RHEA:13097"/>
        <dbReference type="Rhea" id="RHEA-COMP:9925"/>
        <dbReference type="Rhea" id="RHEA-COMP:9945"/>
        <dbReference type="ChEBI" id="CHEBI:15377"/>
        <dbReference type="ChEBI" id="CHEBI:78784"/>
        <dbReference type="ChEBI" id="CHEBI:78827"/>
        <dbReference type="EC" id="4.2.1.59"/>
    </reaction>
</comment>
<comment type="catalytic activity">
    <reaction>
        <text>a 2,3-saturated acyl-[ACP] + NAD(+) = a (2E)-enoyl-[ACP] + NADH + H(+)</text>
        <dbReference type="Rhea" id="RHEA:10240"/>
        <dbReference type="Rhea" id="RHEA-COMP:9925"/>
        <dbReference type="Rhea" id="RHEA-COMP:9926"/>
        <dbReference type="ChEBI" id="CHEBI:15378"/>
        <dbReference type="ChEBI" id="CHEBI:57540"/>
        <dbReference type="ChEBI" id="CHEBI:57945"/>
        <dbReference type="ChEBI" id="CHEBI:78784"/>
        <dbReference type="ChEBI" id="CHEBI:78785"/>
        <dbReference type="EC" id="1.3.1.9"/>
    </reaction>
</comment>
<comment type="catalytic activity">
    <reaction>
        <text>(9Z)-octadecenoyl-[ACP] + H2O = (9Z)-octadecenoate + holo-[ACP] + H(+)</text>
        <dbReference type="Rhea" id="RHEA:15057"/>
        <dbReference type="Rhea" id="RHEA-COMP:9685"/>
        <dbReference type="Rhea" id="RHEA-COMP:9924"/>
        <dbReference type="ChEBI" id="CHEBI:15377"/>
        <dbReference type="ChEBI" id="CHEBI:15378"/>
        <dbReference type="ChEBI" id="CHEBI:30823"/>
        <dbReference type="ChEBI" id="CHEBI:64479"/>
        <dbReference type="ChEBI" id="CHEBI:78783"/>
        <dbReference type="EC" id="3.1.2.14"/>
    </reaction>
</comment>
<comment type="subunit">
    <text>[Alpha(6)beta(6)] hexamers of two multifunctional subunits (alpha and beta).</text>
</comment>
<comment type="interaction">
    <interactant intactId="EBI-6795">
        <id>P07149</id>
    </interactant>
    <interactant intactId="EBI-6806">
        <id>P19097</id>
        <label>FAS2</label>
    </interactant>
    <organismsDiffer>false</organismsDiffer>
    <experiments>10</experiments>
</comment>
<comment type="miscellaneous">
    <text evidence="2">Present with 91800 molecules/cell in log phase SD medium.</text>
</comment>
<comment type="similarity">
    <text evidence="3">Belongs to the fungal fatty acid synthetase subunit beta family.</text>
</comment>
<comment type="sequence caution" evidence="3">
    <conflict type="frameshift">
        <sequence resource="EMBL-CDS" id="CAA27616"/>
    </conflict>
</comment>
<reference key="1">
    <citation type="journal article" date="1991" name="Mol. Gen. Genet.">
        <title>The pentafunctional FAS1 genes of Saccharomyces cerevisiae and Yarrowia lipolytica are co-linear and considerably longer than previously estimated.</title>
        <authorList>
            <person name="Koettig H."/>
            <person name="Rottner G."/>
            <person name="Beck K.-F."/>
            <person name="Schweizer M."/>
            <person name="Schweizer E."/>
        </authorList>
    </citation>
    <scope>NUCLEOTIDE SEQUENCE [GENOMIC DNA]</scope>
</reference>
<reference key="2">
    <citation type="journal article" date="1993" name="Yeast">
        <title>Sequencing and analysis of 51.6 kilobases on the left arm of chromosome XI from Saccharomyces cerevisiae reveals 23 open reading frames including the FAS1 gene.</title>
        <authorList>
            <person name="Wiemann S."/>
            <person name="Voss H."/>
            <person name="Schwager C."/>
            <person name="Rupp T."/>
            <person name="Stegemann J."/>
            <person name="Zimmermann J."/>
            <person name="Grothues D."/>
            <person name="Sensen C."/>
            <person name="Erfle H."/>
            <person name="Hewitt N."/>
            <person name="Banrevi A."/>
            <person name="Ansorge W."/>
        </authorList>
    </citation>
    <scope>NUCLEOTIDE SEQUENCE [GENOMIC DNA]</scope>
</reference>
<reference key="3">
    <citation type="journal article" date="1994" name="Nature">
        <title>Complete DNA sequence of yeast chromosome XI.</title>
        <authorList>
            <person name="Dujon B."/>
            <person name="Alexandraki D."/>
            <person name="Andre B."/>
            <person name="Ansorge W."/>
            <person name="Baladron V."/>
            <person name="Ballesta J.P.G."/>
            <person name="Banrevi A."/>
            <person name="Bolle P.-A."/>
            <person name="Bolotin-Fukuhara M."/>
            <person name="Bossier P."/>
            <person name="Bou G."/>
            <person name="Boyer J."/>
            <person name="Buitrago M.J."/>
            <person name="Cheret G."/>
            <person name="Colleaux L."/>
            <person name="Daignan-Fornier B."/>
            <person name="del Rey F."/>
            <person name="Dion C."/>
            <person name="Domdey H."/>
            <person name="Duesterhoeft A."/>
            <person name="Duesterhus S."/>
            <person name="Entian K.-D."/>
            <person name="Erfle H."/>
            <person name="Esteban P.F."/>
            <person name="Feldmann H."/>
            <person name="Fernandes L."/>
            <person name="Fobo G.M."/>
            <person name="Fritz C."/>
            <person name="Fukuhara H."/>
            <person name="Gabel C."/>
            <person name="Gaillon L."/>
            <person name="Garcia-Cantalejo J.M."/>
            <person name="Garcia-Ramirez J.J."/>
            <person name="Gent M.E."/>
            <person name="Ghazvini M."/>
            <person name="Goffeau A."/>
            <person name="Gonzalez A."/>
            <person name="Grothues D."/>
            <person name="Guerreiro P."/>
            <person name="Hegemann J.H."/>
            <person name="Hewitt N."/>
            <person name="Hilger F."/>
            <person name="Hollenberg C.P."/>
            <person name="Horaitis O."/>
            <person name="Indge K.J."/>
            <person name="Jacquier A."/>
            <person name="James C.M."/>
            <person name="Jauniaux J.-C."/>
            <person name="Jimenez A."/>
            <person name="Keuchel H."/>
            <person name="Kirchrath L."/>
            <person name="Kleine K."/>
            <person name="Koetter P."/>
            <person name="Legrain P."/>
            <person name="Liebl S."/>
            <person name="Louis E.J."/>
            <person name="Maia e Silva A."/>
            <person name="Marck C."/>
            <person name="Monnier A.-L."/>
            <person name="Moestl D."/>
            <person name="Mueller S."/>
            <person name="Obermaier B."/>
            <person name="Oliver S.G."/>
            <person name="Pallier C."/>
            <person name="Pascolo S."/>
            <person name="Pfeiffer F."/>
            <person name="Philippsen P."/>
            <person name="Planta R.J."/>
            <person name="Pohl F.M."/>
            <person name="Pohl T.M."/>
            <person name="Poehlmann R."/>
            <person name="Portetelle D."/>
            <person name="Purnelle B."/>
            <person name="Puzos V."/>
            <person name="Ramezani Rad M."/>
            <person name="Rasmussen S.W."/>
            <person name="Remacha M.A."/>
            <person name="Revuelta J.L."/>
            <person name="Richard G.-F."/>
            <person name="Rieger M."/>
            <person name="Rodrigues-Pousada C."/>
            <person name="Rose M."/>
            <person name="Rupp T."/>
            <person name="Santos M.A."/>
            <person name="Schwager C."/>
            <person name="Sensen C."/>
            <person name="Skala J."/>
            <person name="Soares H."/>
            <person name="Sor F."/>
            <person name="Stegemann J."/>
            <person name="Tettelin H."/>
            <person name="Thierry A."/>
            <person name="Tzermia M."/>
            <person name="Urrestarazu L.A."/>
            <person name="van Dyck L."/>
            <person name="van Vliet-Reedijk J.C."/>
            <person name="Valens M."/>
            <person name="Vandenbol M."/>
            <person name="Vilela C."/>
            <person name="Vissers S."/>
            <person name="von Wettstein D."/>
            <person name="Voss H."/>
            <person name="Wiemann S."/>
            <person name="Xu G."/>
            <person name="Zimmermann J."/>
            <person name="Haasemann M."/>
            <person name="Becker I."/>
            <person name="Mewes H.-W."/>
        </authorList>
    </citation>
    <scope>NUCLEOTIDE SEQUENCE [LARGE SCALE GENOMIC DNA]</scope>
    <source>
        <strain>ATCC 204508 / S288c</strain>
    </source>
</reference>
<reference key="4">
    <citation type="journal article" date="2014" name="G3 (Bethesda)">
        <title>The reference genome sequence of Saccharomyces cerevisiae: Then and now.</title>
        <authorList>
            <person name="Engel S.R."/>
            <person name="Dietrich F.S."/>
            <person name="Fisk D.G."/>
            <person name="Binkley G."/>
            <person name="Balakrishnan R."/>
            <person name="Costanzo M.C."/>
            <person name="Dwight S.S."/>
            <person name="Hitz B.C."/>
            <person name="Karra K."/>
            <person name="Nash R.S."/>
            <person name="Weng S."/>
            <person name="Wong E.D."/>
            <person name="Lloyd P."/>
            <person name="Skrzypek M.S."/>
            <person name="Miyasato S.R."/>
            <person name="Simison M."/>
            <person name="Cherry J.M."/>
        </authorList>
    </citation>
    <scope>GENOME REANNOTATION</scope>
    <source>
        <strain>ATCC 204508 / S288c</strain>
    </source>
</reference>
<reference key="5">
    <citation type="journal article" date="1986" name="Mol. Gen. Genet.">
        <title>The pentafunctional FAS1 gene of yeast: its nucleotide sequence and order of the catalytic domains.</title>
        <authorList>
            <person name="Schweizer M."/>
            <person name="Roberts L.M."/>
            <person name="Hoeltke H.-J."/>
            <person name="Takabayashi K."/>
            <person name="Hoellerer E."/>
            <person name="Hoffmann B."/>
            <person name="Mueller G."/>
            <person name="Koettig H."/>
            <person name="Schweizer E."/>
        </authorList>
    </citation>
    <scope>NUCLEOTIDE SEQUENCE [GENOMIC DNA] OF 1-2025</scope>
</reference>
<reference key="6">
    <citation type="journal article" date="1987" name="J. Biol. Chem.">
        <title>Complementation of mutations and nucleotide sequence of FAS1 gene encoding beta subunit of yeast fatty acid synthase.</title>
        <authorList>
            <person name="Chirala S.S."/>
            <person name="Kuziora M.A."/>
            <person name="Spector D.M."/>
            <person name="Wakil S.J."/>
        </authorList>
    </citation>
    <scope>NUCLEOTIDE SEQUENCE [GENOMIC DNA] OF 1-1980</scope>
    <source>
        <strain>ATCC 26787 / X2180-1B</strain>
    </source>
</reference>
<reference key="7">
    <citation type="journal article" date="1994" name="Yeast">
        <title>Phosphoribosylpyrophosphate synthetase (PRS): a new gene family in Saccharomyces cerevisiae.</title>
        <authorList>
            <person name="Carter A.T."/>
            <person name="Narbad A."/>
            <person name="Pearson B.M."/>
            <person name="Beck K.-F."/>
            <person name="Logghe M."/>
            <person name="Contreras R."/>
            <person name="Schweizer M."/>
        </authorList>
    </citation>
    <scope>NUCLEOTIDE SEQUENCE [GENOMIC DNA] OF 1947-2051</scope>
    <source>
        <strain>ATCC 26786 / X2180-1A</strain>
    </source>
</reference>
<reference key="8">
    <citation type="journal article" date="2003" name="Nature">
        <title>Global analysis of protein expression in yeast.</title>
        <authorList>
            <person name="Ghaemmaghami S."/>
            <person name="Huh W.-K."/>
            <person name="Bower K."/>
            <person name="Howson R.W."/>
            <person name="Belle A."/>
            <person name="Dephoure N."/>
            <person name="O'Shea E.K."/>
            <person name="Weissman J.S."/>
        </authorList>
    </citation>
    <scope>LEVEL OF PROTEIN EXPRESSION [LARGE SCALE ANALYSIS]</scope>
</reference>
<reference key="9">
    <citation type="journal article" date="2008" name="Mol. Cell. Proteomics">
        <title>A multidimensional chromatography technology for in-depth phosphoproteome analysis.</title>
        <authorList>
            <person name="Albuquerque C.P."/>
            <person name="Smolka M.B."/>
            <person name="Payne S.H."/>
            <person name="Bafna V."/>
            <person name="Eng J."/>
            <person name="Zhou H."/>
        </authorList>
    </citation>
    <scope>PHOSPHORYLATION [LARGE SCALE ANALYSIS] AT SER-1121</scope>
    <scope>IDENTIFICATION BY MASS SPECTROMETRY [LARGE SCALE ANALYSIS]</scope>
</reference>
<reference key="10">
    <citation type="journal article" date="2009" name="Science">
        <title>Global analysis of Cdk1 substrate phosphorylation sites provides insights into evolution.</title>
        <authorList>
            <person name="Holt L.J."/>
            <person name="Tuch B.B."/>
            <person name="Villen J."/>
            <person name="Johnson A.D."/>
            <person name="Gygi S.P."/>
            <person name="Morgan D.O."/>
        </authorList>
    </citation>
    <scope>PHOSPHORYLATION [LARGE SCALE ANALYSIS] AT THR-733 AND SER-1121</scope>
    <scope>IDENTIFICATION BY MASS SPECTROMETRY [LARGE SCALE ANALYSIS]</scope>
</reference>
<reference key="11">
    <citation type="journal article" date="2012" name="Proc. Natl. Acad. Sci. U.S.A.">
        <title>N-terminal acetylome analyses and functional insights of the N-terminal acetyltransferase NatB.</title>
        <authorList>
            <person name="Van Damme P."/>
            <person name="Lasa M."/>
            <person name="Polevoda B."/>
            <person name="Gazquez C."/>
            <person name="Elosegui-Artola A."/>
            <person name="Kim D.S."/>
            <person name="De Juan-Pardo E."/>
            <person name="Demeyer K."/>
            <person name="Hole K."/>
            <person name="Larrea E."/>
            <person name="Timmerman E."/>
            <person name="Prieto J."/>
            <person name="Arnesen T."/>
            <person name="Sherman F."/>
            <person name="Gevaert K."/>
            <person name="Aldabe R."/>
        </authorList>
    </citation>
    <scope>ACETYLATION [LARGE SCALE ANALYSIS] AT MET-1</scope>
    <scope>IDENTIFICATION BY MASS SPECTROMETRY [LARGE SCALE ANALYSIS]</scope>
</reference>
<reference key="12">
    <citation type="journal article" date="2012" name="Proteomics">
        <title>Sites of ubiquitin attachment in Saccharomyces cerevisiae.</title>
        <authorList>
            <person name="Starita L.M."/>
            <person name="Lo R.S."/>
            <person name="Eng J.K."/>
            <person name="von Haller P.D."/>
            <person name="Fields S."/>
        </authorList>
    </citation>
    <scope>UBIQUITINATION [LARGE SCALE ANALYSIS] AT LYS-1364</scope>
    <scope>IDENTIFICATION BY MASS SPECTROMETRY [LARGE SCALE ANALYSIS]</scope>
</reference>
<feature type="chain" id="PRO_0000180282" description="Fatty acid synthase subunit beta">
    <location>
        <begin position="1"/>
        <end position="2051"/>
    </location>
</feature>
<feature type="domain" description="MaoC-like">
    <location>
        <begin position="1523"/>
        <end position="1648"/>
    </location>
</feature>
<feature type="region of interest" description="Acetyltransferase">
    <location>
        <begin position="1"/>
        <end position="468"/>
    </location>
</feature>
<feature type="region of interest" description="Enoyl reductase">
    <location>
        <begin position="480"/>
        <end position="868"/>
    </location>
</feature>
<feature type="region of interest" description="Dehydratase">
    <location>
        <begin position="1144"/>
        <end position="1626"/>
    </location>
</feature>
<feature type="region of interest" description="Malonyl/palmitoyl transferase">
    <location>
        <begin position="1627"/>
        <end position="1845"/>
    </location>
</feature>
<feature type="active site" description="For acetyltransferase activity" evidence="1">
    <location>
        <position position="274"/>
    </location>
</feature>
<feature type="active site" description="For malonyltransferase activity" evidence="1">
    <location>
        <position position="1808"/>
    </location>
</feature>
<feature type="modified residue" description="N-acetylmethionine" evidence="7">
    <location>
        <position position="1"/>
    </location>
</feature>
<feature type="modified residue" description="Phosphothreonine" evidence="5">
    <location>
        <position position="733"/>
    </location>
</feature>
<feature type="modified residue" description="Phosphoserine" evidence="4 5">
    <location>
        <position position="1121"/>
    </location>
</feature>
<feature type="cross-link" description="Glycyl lysine isopeptide (Lys-Gly) (interchain with G-Cter in ubiquitin)" evidence="6">
    <location>
        <position position="1364"/>
    </location>
</feature>
<feature type="sequence conflict" description="In Ref. 1; AAB59310 and 5; CAA27616." evidence="3" ref="1 5">
    <original>S</original>
    <variation>F</variation>
    <location>
        <position position="191"/>
    </location>
</feature>
<feature type="sequence conflict" description="In Ref. 6; AAA34602." evidence="3" ref="6">
    <original>G</original>
    <variation>D</variation>
    <location>
        <position position="212"/>
    </location>
</feature>
<feature type="sequence conflict" description="In Ref. 6; AAA34602." evidence="3" ref="6">
    <original>D</original>
    <variation>G</variation>
    <location>
        <position position="403"/>
    </location>
</feature>
<feature type="sequence conflict" description="In Ref. 1; AAB59310 and 5; CAA27616." evidence="3" ref="1 5">
    <original>H</original>
    <variation>Q</variation>
    <location>
        <position position="1039"/>
    </location>
</feature>
<feature type="sequence conflict" description="In Ref. 6; AAA34602." evidence="3" ref="6">
    <original>W</original>
    <variation>R</variation>
    <location>
        <position position="1149"/>
    </location>
</feature>
<feature type="sequence conflict" description="In Ref. 1; AAB59310 and 5; CAA27616." evidence="3" ref="1 5">
    <original>I</original>
    <variation>F</variation>
    <location>
        <position position="1184"/>
    </location>
</feature>
<feature type="sequence conflict" description="In Ref. 6; AAA34602." evidence="3" ref="6">
    <original>FEI</original>
    <variation>SET</variation>
    <location>
        <begin position="1290"/>
        <end position="1292"/>
    </location>
</feature>
<feature type="sequence conflict" description="In Ref. 1; AAB59310 and 5; CAA27616." evidence="3" ref="1 5">
    <original>WRA</original>
    <variation>LRG</variation>
    <location>
        <begin position="1331"/>
        <end position="1333"/>
    </location>
</feature>
<feature type="sequence conflict" description="In Ref. 6; AAA34602." evidence="3" ref="6">
    <original>TSSFF</original>
    <variation>IFLFL</variation>
    <location>
        <begin position="1407"/>
        <end position="1411"/>
    </location>
</feature>
<feature type="sequence conflict" description="In Ref. 1; AAB59310 and 5; CAA27616." evidence="3" ref="1 5">
    <original>D</original>
    <variation>H</variation>
    <location>
        <position position="1559"/>
    </location>
</feature>
<feature type="sequence conflict" description="In Ref. 6; AAA34602." evidence="3" ref="6">
    <original>P</original>
    <variation>L</variation>
    <location>
        <position position="1576"/>
    </location>
</feature>
<feature type="sequence conflict" description="In Ref. 6; AAA34602." evidence="3" ref="6">
    <original>A</original>
    <variation>T</variation>
    <location>
        <position position="1587"/>
    </location>
</feature>
<feature type="sequence conflict" description="In Ref. 6; AAA34602." evidence="3" ref="6">
    <original>M</original>
    <variation>T</variation>
    <location>
        <position position="1631"/>
    </location>
</feature>
<feature type="sequence conflict" description="In Ref. 5; CAA27616." evidence="3" ref="5">
    <original>D</original>
    <variation>H</variation>
    <location>
        <position position="1647"/>
    </location>
</feature>
<feature type="sequence conflict" description="In Ref. 1; AAB59310 and 5; CAA27616." evidence="3" ref="1 5">
    <original>V</original>
    <variation>G</variation>
    <location>
        <position position="1661"/>
    </location>
</feature>
<feature type="sequence conflict" description="In Ref. 6; AAA34602." evidence="3" ref="6">
    <original>E</original>
    <variation>K</variation>
    <location>
        <position position="1876"/>
    </location>
</feature>
<feature type="sequence conflict" description="In Ref. 6; AAA34602." evidence="3" ref="6">
    <original>Y</original>
    <variation>T</variation>
    <location>
        <position position="1980"/>
    </location>
</feature>
<feature type="strand" evidence="10">
    <location>
        <begin position="6"/>
        <end position="13"/>
    </location>
</feature>
<feature type="strand" evidence="10">
    <location>
        <begin position="16"/>
        <end position="23"/>
    </location>
</feature>
<feature type="helix" evidence="10">
    <location>
        <begin position="24"/>
        <end position="40"/>
    </location>
</feature>
<feature type="turn" evidence="10">
    <location>
        <begin position="46"/>
        <end position="48"/>
    </location>
</feature>
<feature type="strand" evidence="10">
    <location>
        <begin position="50"/>
        <end position="53"/>
    </location>
</feature>
<feature type="helix" evidence="10">
    <location>
        <begin position="57"/>
        <end position="70"/>
    </location>
</feature>
<feature type="strand" evidence="10">
    <location>
        <begin position="74"/>
        <end position="76"/>
    </location>
</feature>
<feature type="helix" evidence="10">
    <location>
        <begin position="81"/>
        <end position="94"/>
    </location>
</feature>
<feature type="strand" evidence="12">
    <location>
        <begin position="97"/>
        <end position="99"/>
    </location>
</feature>
<feature type="helix" evidence="10">
    <location>
        <begin position="101"/>
        <end position="110"/>
    </location>
</feature>
<feature type="strand" evidence="12">
    <location>
        <begin position="111"/>
        <end position="113"/>
    </location>
</feature>
<feature type="helix" evidence="10">
    <location>
        <begin position="116"/>
        <end position="132"/>
    </location>
</feature>
<feature type="helix" evidence="10">
    <location>
        <begin position="144"/>
        <end position="151"/>
    </location>
</feature>
<feature type="strand" evidence="10">
    <location>
        <begin position="156"/>
        <end position="160"/>
    </location>
</feature>
<feature type="strand" evidence="10">
    <location>
        <begin position="163"/>
        <end position="165"/>
    </location>
</feature>
<feature type="helix" evidence="10">
    <location>
        <begin position="171"/>
        <end position="178"/>
    </location>
</feature>
<feature type="helix" evidence="10">
    <location>
        <begin position="181"/>
        <end position="201"/>
    </location>
</feature>
<feature type="strand" evidence="10">
    <location>
        <begin position="202"/>
        <end position="204"/>
    </location>
</feature>
<feature type="turn" evidence="10">
    <location>
        <begin position="205"/>
        <end position="208"/>
    </location>
</feature>
<feature type="helix" evidence="10">
    <location>
        <begin position="216"/>
        <end position="220"/>
    </location>
</feature>
<feature type="helix" evidence="10">
    <location>
        <begin position="222"/>
        <end position="224"/>
    </location>
</feature>
<feature type="helix" evidence="10">
    <location>
        <begin position="228"/>
        <end position="231"/>
    </location>
</feature>
<feature type="helix" evidence="10">
    <location>
        <begin position="234"/>
        <end position="255"/>
    </location>
</feature>
<feature type="helix" evidence="10">
    <location>
        <begin position="260"/>
        <end position="266"/>
    </location>
</feature>
<feature type="strand" evidence="10">
    <location>
        <begin position="268"/>
        <end position="273"/>
    </location>
</feature>
<feature type="turn" evidence="10">
    <location>
        <begin position="274"/>
        <end position="276"/>
    </location>
</feature>
<feature type="helix" evidence="10">
    <location>
        <begin position="277"/>
        <end position="283"/>
    </location>
</feature>
<feature type="strand" evidence="10">
    <location>
        <begin position="288"/>
        <end position="290"/>
    </location>
</feature>
<feature type="helix" evidence="10">
    <location>
        <begin position="292"/>
        <end position="311"/>
    </location>
</feature>
<feature type="helix" evidence="10">
    <location>
        <begin position="321"/>
        <end position="324"/>
    </location>
</feature>
<feature type="turn" evidence="10">
    <location>
        <begin position="325"/>
        <end position="331"/>
    </location>
</feature>
<feature type="strand" evidence="10">
    <location>
        <begin position="337"/>
        <end position="343"/>
    </location>
</feature>
<feature type="helix" evidence="10">
    <location>
        <begin position="346"/>
        <end position="357"/>
    </location>
</feature>
<feature type="helix" evidence="10">
    <location>
        <begin position="362"/>
        <end position="364"/>
    </location>
</feature>
<feature type="strand" evidence="10">
    <location>
        <begin position="367"/>
        <end position="371"/>
    </location>
</feature>
<feature type="strand" evidence="10">
    <location>
        <begin position="373"/>
        <end position="381"/>
    </location>
</feature>
<feature type="helix" evidence="10">
    <location>
        <begin position="383"/>
        <end position="394"/>
    </location>
</feature>
<feature type="helix" evidence="9">
    <location>
        <begin position="400"/>
        <end position="402"/>
    </location>
</feature>
<feature type="helix" evidence="10">
    <location>
        <begin position="404"/>
        <end position="406"/>
    </location>
</feature>
<feature type="helix" evidence="10">
    <location>
        <begin position="409"/>
        <end position="411"/>
    </location>
</feature>
<feature type="strand" evidence="10">
    <location>
        <begin position="418"/>
        <end position="420"/>
    </location>
</feature>
<feature type="strand" evidence="10">
    <location>
        <begin position="428"/>
        <end position="430"/>
    </location>
</feature>
<feature type="helix" evidence="10">
    <location>
        <begin position="433"/>
        <end position="435"/>
    </location>
</feature>
<feature type="helix" evidence="10">
    <location>
        <begin position="436"/>
        <end position="445"/>
    </location>
</feature>
<feature type="turn" evidence="10">
    <location>
        <begin position="452"/>
        <end position="454"/>
    </location>
</feature>
<feature type="strand" evidence="10">
    <location>
        <begin position="462"/>
        <end position="464"/>
    </location>
</feature>
<feature type="helix" evidence="13">
    <location>
        <begin position="468"/>
        <end position="470"/>
    </location>
</feature>
<feature type="helix" evidence="10">
    <location>
        <begin position="475"/>
        <end position="484"/>
    </location>
</feature>
<feature type="turn" evidence="10">
    <location>
        <begin position="490"/>
        <end position="492"/>
    </location>
</feature>
<feature type="strand" evidence="10">
    <location>
        <begin position="499"/>
        <end position="503"/>
    </location>
</feature>
<feature type="strand" evidence="8">
    <location>
        <begin position="505"/>
        <end position="507"/>
    </location>
</feature>
<feature type="helix" evidence="10">
    <location>
        <begin position="508"/>
        <end position="510"/>
    </location>
</feature>
<feature type="helix" evidence="10">
    <location>
        <begin position="512"/>
        <end position="519"/>
    </location>
</feature>
<feature type="turn" evidence="10">
    <location>
        <begin position="521"/>
        <end position="524"/>
    </location>
</feature>
<feature type="strand" evidence="10">
    <location>
        <begin position="526"/>
        <end position="531"/>
    </location>
</feature>
<feature type="strand" evidence="10">
    <location>
        <begin position="540"/>
        <end position="542"/>
    </location>
</feature>
<feature type="helix" evidence="10">
    <location>
        <begin position="544"/>
        <end position="548"/>
    </location>
</feature>
<feature type="turn" evidence="10">
    <location>
        <begin position="552"/>
        <end position="554"/>
    </location>
</feature>
<feature type="helix" evidence="10">
    <location>
        <begin position="561"/>
        <end position="564"/>
    </location>
</feature>
<feature type="strand" evidence="10">
    <location>
        <begin position="568"/>
        <end position="572"/>
    </location>
</feature>
<feature type="strand" evidence="10">
    <location>
        <begin position="577"/>
        <end position="580"/>
    </location>
</feature>
<feature type="helix" evidence="10">
    <location>
        <begin position="584"/>
        <end position="587"/>
    </location>
</feature>
<feature type="strand" evidence="10">
    <location>
        <begin position="591"/>
        <end position="594"/>
    </location>
</feature>
<feature type="turn" evidence="10">
    <location>
        <begin position="598"/>
        <end position="602"/>
    </location>
</feature>
<feature type="helix" evidence="10">
    <location>
        <begin position="606"/>
        <end position="612"/>
    </location>
</feature>
<feature type="strand" evidence="10">
    <location>
        <begin position="616"/>
        <end position="620"/>
    </location>
</feature>
<feature type="helix" evidence="10">
    <location>
        <begin position="621"/>
        <end position="623"/>
    </location>
</feature>
<feature type="strand" evidence="10">
    <location>
        <begin position="625"/>
        <end position="627"/>
    </location>
</feature>
<feature type="helix" evidence="10">
    <location>
        <begin position="628"/>
        <end position="638"/>
    </location>
</feature>
<feature type="strand" evidence="10">
    <location>
        <begin position="647"/>
        <end position="654"/>
    </location>
</feature>
<feature type="helix" evidence="10">
    <location>
        <begin position="656"/>
        <end position="671"/>
    </location>
</feature>
<feature type="strand" evidence="10">
    <location>
        <begin position="678"/>
        <end position="684"/>
    </location>
</feature>
<feature type="helix" evidence="10">
    <location>
        <begin position="690"/>
        <end position="693"/>
    </location>
</feature>
<feature type="turn" evidence="10">
    <location>
        <begin position="694"/>
        <end position="697"/>
    </location>
</feature>
<feature type="strand" evidence="10">
    <location>
        <begin position="701"/>
        <end position="706"/>
    </location>
</feature>
<feature type="helix" evidence="10">
    <location>
        <begin position="711"/>
        <end position="722"/>
    </location>
</feature>
<feature type="strand" evidence="10">
    <location>
        <begin position="728"/>
        <end position="732"/>
    </location>
</feature>
<feature type="strand" evidence="10">
    <location>
        <begin position="737"/>
        <end position="740"/>
    </location>
</feature>
<feature type="helix" evidence="10">
    <location>
        <begin position="747"/>
        <end position="758"/>
    </location>
</feature>
<feature type="strand" evidence="10">
    <location>
        <begin position="763"/>
        <end position="767"/>
    </location>
</feature>
<feature type="helix" evidence="10">
    <location>
        <begin position="774"/>
        <end position="782"/>
    </location>
</feature>
<feature type="helix" evidence="10">
    <location>
        <begin position="784"/>
        <end position="786"/>
    </location>
</feature>
<feature type="turn" evidence="10">
    <location>
        <begin position="787"/>
        <end position="790"/>
    </location>
</feature>
<feature type="strand" evidence="12">
    <location>
        <begin position="797"/>
        <end position="800"/>
    </location>
</feature>
<feature type="turn" evidence="10">
    <location>
        <begin position="803"/>
        <end position="807"/>
    </location>
</feature>
<feature type="strand" evidence="9">
    <location>
        <begin position="808"/>
        <end position="811"/>
    </location>
</feature>
<feature type="helix" evidence="10">
    <location>
        <begin position="815"/>
        <end position="823"/>
    </location>
</feature>
<feature type="helix" evidence="10">
    <location>
        <begin position="829"/>
        <end position="831"/>
    </location>
</feature>
<feature type="helix" evidence="10">
    <location>
        <begin position="833"/>
        <end position="835"/>
    </location>
</feature>
<feature type="strand" evidence="10">
    <location>
        <begin position="840"/>
        <end position="842"/>
    </location>
</feature>
<feature type="strand" evidence="10">
    <location>
        <begin position="844"/>
        <end position="847"/>
    </location>
</feature>
<feature type="strand" evidence="10">
    <location>
        <begin position="853"/>
        <end position="856"/>
    </location>
</feature>
<feature type="helix" evidence="10">
    <location>
        <begin position="860"/>
        <end position="871"/>
    </location>
</feature>
<feature type="turn" evidence="12">
    <location>
        <begin position="872"/>
        <end position="874"/>
    </location>
</feature>
<feature type="turn" evidence="12">
    <location>
        <begin position="877"/>
        <end position="879"/>
    </location>
</feature>
<feature type="helix" evidence="10">
    <location>
        <begin position="880"/>
        <end position="886"/>
    </location>
</feature>
<feature type="helix" evidence="10">
    <location>
        <begin position="888"/>
        <end position="897"/>
    </location>
</feature>
<feature type="strand" evidence="13">
    <location>
        <begin position="903"/>
        <end position="907"/>
    </location>
</feature>
<feature type="helix" evidence="10">
    <location>
        <begin position="914"/>
        <end position="916"/>
    </location>
</feature>
<feature type="helix" evidence="10">
    <location>
        <begin position="919"/>
        <end position="930"/>
    </location>
</feature>
<feature type="turn" evidence="10">
    <location>
        <begin position="933"/>
        <end position="936"/>
    </location>
</feature>
<feature type="strand" evidence="10">
    <location>
        <begin position="937"/>
        <end position="939"/>
    </location>
</feature>
<feature type="helix" evidence="10">
    <location>
        <begin position="941"/>
        <end position="958"/>
    </location>
</feature>
<feature type="helix" evidence="10">
    <location>
        <begin position="970"/>
        <end position="974"/>
    </location>
</feature>
<feature type="helix" evidence="10">
    <location>
        <begin position="976"/>
        <end position="984"/>
    </location>
</feature>
<feature type="helix" evidence="10">
    <location>
        <begin position="988"/>
        <end position="991"/>
    </location>
</feature>
<feature type="strand" evidence="11">
    <location>
        <begin position="992"/>
        <end position="994"/>
    </location>
</feature>
<feature type="helix" evidence="10">
    <location>
        <begin position="998"/>
        <end position="1005"/>
    </location>
</feature>
<feature type="turn" evidence="10">
    <location>
        <begin position="1006"/>
        <end position="1008"/>
    </location>
</feature>
<feature type="strand" evidence="12">
    <location>
        <begin position="1010"/>
        <end position="1012"/>
    </location>
</feature>
<feature type="strand" evidence="10">
    <location>
        <begin position="1016"/>
        <end position="1018"/>
    </location>
</feature>
<feature type="helix" evidence="10">
    <location>
        <begin position="1025"/>
        <end position="1030"/>
    </location>
</feature>
<feature type="helix" evidence="10">
    <location>
        <begin position="1035"/>
        <end position="1042"/>
    </location>
</feature>
<feature type="strand" evidence="9">
    <location>
        <begin position="1043"/>
        <end position="1046"/>
    </location>
</feature>
<feature type="helix" evidence="10">
    <location>
        <begin position="1048"/>
        <end position="1050"/>
    </location>
</feature>
<feature type="helix" evidence="10">
    <location>
        <begin position="1059"/>
        <end position="1062"/>
    </location>
</feature>
<feature type="helix" evidence="10">
    <location>
        <begin position="1070"/>
        <end position="1089"/>
    </location>
</feature>
<feature type="helix" evidence="10">
    <location>
        <begin position="1094"/>
        <end position="1096"/>
    </location>
</feature>
<feature type="strand" evidence="10">
    <location>
        <begin position="1099"/>
        <end position="1102"/>
    </location>
</feature>
<feature type="strand" evidence="10">
    <location>
        <begin position="1126"/>
        <end position="1128"/>
    </location>
</feature>
<feature type="helix" evidence="10">
    <location>
        <begin position="1135"/>
        <end position="1143"/>
    </location>
</feature>
<feature type="helix" evidence="10">
    <location>
        <begin position="1149"/>
        <end position="1155"/>
    </location>
</feature>
<feature type="strand" evidence="10">
    <location>
        <begin position="1158"/>
        <end position="1163"/>
    </location>
</feature>
<feature type="strand" evidence="10">
    <location>
        <begin position="1165"/>
        <end position="1167"/>
    </location>
</feature>
<feature type="helix" evidence="10">
    <location>
        <begin position="1169"/>
        <end position="1173"/>
    </location>
</feature>
<feature type="strand" evidence="10">
    <location>
        <begin position="1181"/>
        <end position="1186"/>
    </location>
</feature>
<feature type="strand" evidence="10">
    <location>
        <begin position="1188"/>
        <end position="1190"/>
    </location>
</feature>
<feature type="strand" evidence="10">
    <location>
        <begin position="1194"/>
        <end position="1198"/>
    </location>
</feature>
<feature type="strand" evidence="10">
    <location>
        <begin position="1209"/>
        <end position="1212"/>
    </location>
</feature>
<feature type="helix" evidence="10">
    <location>
        <begin position="1215"/>
        <end position="1217"/>
    </location>
</feature>
<feature type="strand" evidence="10">
    <location>
        <begin position="1218"/>
        <end position="1225"/>
    </location>
</feature>
<feature type="strand" evidence="12">
    <location>
        <begin position="1229"/>
        <end position="1232"/>
    </location>
</feature>
<feature type="strand" evidence="10">
    <location>
        <begin position="1234"/>
        <end position="1242"/>
    </location>
</feature>
<feature type="strand" evidence="12">
    <location>
        <begin position="1246"/>
        <end position="1248"/>
    </location>
</feature>
<feature type="strand" evidence="12">
    <location>
        <begin position="1251"/>
        <end position="1253"/>
    </location>
</feature>
<feature type="helix" evidence="10">
    <location>
        <begin position="1258"/>
        <end position="1270"/>
    </location>
</feature>
<feature type="strand" evidence="10">
    <location>
        <begin position="1281"/>
        <end position="1286"/>
    </location>
</feature>
<feature type="helix" evidence="10">
    <location>
        <begin position="1294"/>
        <end position="1303"/>
    </location>
</feature>
<feature type="helix" evidence="12">
    <location>
        <begin position="1309"/>
        <end position="1311"/>
    </location>
</feature>
<feature type="helix" evidence="10">
    <location>
        <begin position="1325"/>
        <end position="1334"/>
    </location>
</feature>
<feature type="helix" evidence="10">
    <location>
        <begin position="1335"/>
        <end position="1337"/>
    </location>
</feature>
<feature type="helix" evidence="12">
    <location>
        <begin position="1341"/>
        <end position="1343"/>
    </location>
</feature>
<feature type="helix" evidence="10">
    <location>
        <begin position="1347"/>
        <end position="1349"/>
    </location>
</feature>
<feature type="strand" evidence="10">
    <location>
        <begin position="1354"/>
        <end position="1359"/>
    </location>
</feature>
<feature type="strand" evidence="9">
    <location>
        <begin position="1367"/>
        <end position="1369"/>
    </location>
</feature>
<feature type="strand" evidence="10">
    <location>
        <begin position="1371"/>
        <end position="1382"/>
    </location>
</feature>
<feature type="strand" evidence="10">
    <location>
        <begin position="1387"/>
        <end position="1398"/>
    </location>
</feature>
<feature type="strand" evidence="10">
    <location>
        <begin position="1401"/>
        <end position="1414"/>
    </location>
</feature>
<feature type="helix" evidence="10">
    <location>
        <begin position="1419"/>
        <end position="1421"/>
    </location>
</feature>
<feature type="strand" evidence="10">
    <location>
        <begin position="1423"/>
        <end position="1427"/>
    </location>
</feature>
<feature type="strand" evidence="10">
    <location>
        <begin position="1431"/>
        <end position="1434"/>
    </location>
</feature>
<feature type="strand" evidence="10">
    <location>
        <begin position="1437"/>
        <end position="1439"/>
    </location>
</feature>
<feature type="helix" evidence="10">
    <location>
        <begin position="1440"/>
        <end position="1445"/>
    </location>
</feature>
<feature type="strand" evidence="10">
    <location>
        <begin position="1447"/>
        <end position="1453"/>
    </location>
</feature>
<feature type="strand" evidence="10">
    <location>
        <begin position="1463"/>
        <end position="1466"/>
    </location>
</feature>
<feature type="strand" evidence="10">
    <location>
        <begin position="1469"/>
        <end position="1478"/>
    </location>
</feature>
<feature type="strand" evidence="10">
    <location>
        <begin position="1480"/>
        <end position="1492"/>
    </location>
</feature>
<feature type="strand" evidence="10">
    <location>
        <begin position="1498"/>
        <end position="1510"/>
    </location>
</feature>
<feature type="helix" evidence="10">
    <location>
        <begin position="1515"/>
        <end position="1521"/>
    </location>
</feature>
<feature type="strand" evidence="10">
    <location>
        <begin position="1524"/>
        <end position="1526"/>
    </location>
</feature>
<feature type="strand" evidence="10">
    <location>
        <begin position="1531"/>
        <end position="1545"/>
    </location>
</feature>
<feature type="helix" evidence="10">
    <location>
        <begin position="1551"/>
        <end position="1556"/>
    </location>
</feature>
<feature type="turn" evidence="10">
    <location>
        <begin position="1562"/>
        <end position="1564"/>
    </location>
</feature>
<feature type="turn" evidence="10">
    <location>
        <begin position="1568"/>
        <end position="1574"/>
    </location>
</feature>
<feature type="strand" evidence="10">
    <location>
        <begin position="1576"/>
        <end position="1578"/>
    </location>
</feature>
<feature type="helix" evidence="10">
    <location>
        <begin position="1582"/>
        <end position="1594"/>
    </location>
</feature>
<feature type="turn" evidence="10">
    <location>
        <begin position="1595"/>
        <end position="1597"/>
    </location>
</feature>
<feature type="strand" evidence="13">
    <location>
        <begin position="1598"/>
        <end position="1600"/>
    </location>
</feature>
<feature type="helix" evidence="10">
    <location>
        <begin position="1602"/>
        <end position="1604"/>
    </location>
</feature>
<feature type="strand" evidence="10">
    <location>
        <begin position="1605"/>
        <end position="1612"/>
    </location>
</feature>
<feature type="strand" evidence="10">
    <location>
        <begin position="1621"/>
        <end position="1632"/>
    </location>
</feature>
<feature type="strand" evidence="10">
    <location>
        <begin position="1635"/>
        <end position="1643"/>
    </location>
</feature>
<feature type="strand" evidence="10">
    <location>
        <begin position="1649"/>
        <end position="1657"/>
    </location>
</feature>
<feature type="strand" evidence="10">
    <location>
        <begin position="1662"/>
        <end position="1666"/>
    </location>
</feature>
<feature type="turn" evidence="10">
    <location>
        <begin position="1674"/>
        <end position="1679"/>
    </location>
</feature>
<feature type="helix" evidence="10">
    <location>
        <begin position="1680"/>
        <end position="1682"/>
    </location>
</feature>
<feature type="helix" evidence="10">
    <location>
        <begin position="1685"/>
        <end position="1701"/>
    </location>
</feature>
<feature type="helix" evidence="10">
    <location>
        <begin position="1707"/>
        <end position="1711"/>
    </location>
</feature>
<feature type="strand" evidence="10">
    <location>
        <begin position="1715"/>
        <end position="1720"/>
    </location>
</feature>
<feature type="helix" evidence="10">
    <location>
        <begin position="1724"/>
        <end position="1734"/>
    </location>
</feature>
<feature type="strand" evidence="12">
    <location>
        <begin position="1739"/>
        <end position="1748"/>
    </location>
</feature>
<feature type="strand" evidence="10">
    <location>
        <begin position="1749"/>
        <end position="1751"/>
    </location>
</feature>
<feature type="strand" evidence="10">
    <location>
        <begin position="1761"/>
        <end position="1765"/>
    </location>
</feature>
<feature type="helix" evidence="10">
    <location>
        <begin position="1770"/>
        <end position="1772"/>
    </location>
</feature>
<feature type="helix" evidence="10">
    <location>
        <begin position="1774"/>
        <end position="1794"/>
    </location>
</feature>
<feature type="strand" evidence="10">
    <location>
        <begin position="1803"/>
        <end position="1809"/>
    </location>
</feature>
<feature type="helix" evidence="10">
    <location>
        <begin position="1810"/>
        <end position="1818"/>
    </location>
</feature>
<feature type="helix" evidence="10">
    <location>
        <begin position="1824"/>
        <end position="1840"/>
    </location>
</feature>
<feature type="strand" evidence="10">
    <location>
        <begin position="1846"/>
        <end position="1848"/>
    </location>
</feature>
<feature type="strand" evidence="10">
    <location>
        <begin position="1850"/>
        <end position="1857"/>
    </location>
</feature>
<feature type="helix" evidence="10">
    <location>
        <begin position="1859"/>
        <end position="1862"/>
    </location>
</feature>
<feature type="helix" evidence="10">
    <location>
        <begin position="1868"/>
        <end position="1882"/>
    </location>
</feature>
<feature type="strand" evidence="10">
    <location>
        <begin position="1886"/>
        <end position="1893"/>
    </location>
</feature>
<feature type="turn" evidence="10">
    <location>
        <begin position="1894"/>
        <end position="1896"/>
    </location>
</feature>
<feature type="strand" evidence="10">
    <location>
        <begin position="1897"/>
        <end position="1903"/>
    </location>
</feature>
<feature type="helix" evidence="10">
    <location>
        <begin position="1904"/>
        <end position="1920"/>
    </location>
</feature>
<feature type="helix" evidence="10">
    <location>
        <begin position="1924"/>
        <end position="1930"/>
    </location>
</feature>
<feature type="helix" evidence="10">
    <location>
        <begin position="1935"/>
        <end position="1951"/>
    </location>
</feature>
<feature type="strand" evidence="10">
    <location>
        <begin position="1964"/>
        <end position="1968"/>
    </location>
</feature>
<feature type="helix" evidence="10">
    <location>
        <begin position="1979"/>
        <end position="1985"/>
    </location>
</feature>
<feature type="helix" evidence="10">
    <location>
        <begin position="1986"/>
        <end position="1995"/>
    </location>
</feature>
<feature type="turn" evidence="10">
    <location>
        <begin position="1998"/>
        <end position="2000"/>
    </location>
</feature>
<feature type="helix" evidence="10">
    <location>
        <begin position="2003"/>
        <end position="2005"/>
    </location>
</feature>
<feature type="turn" evidence="10">
    <location>
        <begin position="2006"/>
        <end position="2009"/>
    </location>
</feature>
<feature type="strand" evidence="10">
    <location>
        <begin position="2013"/>
        <end position="2015"/>
    </location>
</feature>
<feature type="helix" evidence="10">
    <location>
        <begin position="2023"/>
        <end position="2033"/>
    </location>
</feature>
<feature type="helix" evidence="10">
    <location>
        <begin position="2036"/>
        <end position="2042"/>
    </location>
</feature>
<feature type="helix" evidence="10">
    <location>
        <begin position="2043"/>
        <end position="2048"/>
    </location>
</feature>
<keyword id="KW-0002">3D-structure</keyword>
<keyword id="KW-0007">Acetylation</keyword>
<keyword id="KW-0275">Fatty acid biosynthesis</keyword>
<keyword id="KW-0276">Fatty acid metabolism</keyword>
<keyword id="KW-0378">Hydrolase</keyword>
<keyword id="KW-1017">Isopeptide bond</keyword>
<keyword id="KW-0444">Lipid biosynthesis</keyword>
<keyword id="KW-0443">Lipid metabolism</keyword>
<keyword id="KW-0456">Lyase</keyword>
<keyword id="KW-0511">Multifunctional enzyme</keyword>
<keyword id="KW-0520">NAD</keyword>
<keyword id="KW-0521">NADP</keyword>
<keyword id="KW-0560">Oxidoreductase</keyword>
<keyword id="KW-0597">Phosphoprotein</keyword>
<keyword id="KW-1185">Reference proteome</keyword>
<keyword id="KW-0808">Transferase</keyword>
<keyword id="KW-0832">Ubl conjugation</keyword>
<evidence type="ECO:0000250" key="1"/>
<evidence type="ECO:0000269" key="2">
    <source>
    </source>
</evidence>
<evidence type="ECO:0000305" key="3"/>
<evidence type="ECO:0007744" key="4">
    <source>
    </source>
</evidence>
<evidence type="ECO:0007744" key="5">
    <source>
    </source>
</evidence>
<evidence type="ECO:0007744" key="6">
    <source>
    </source>
</evidence>
<evidence type="ECO:0007744" key="7">
    <source>
    </source>
</evidence>
<evidence type="ECO:0007829" key="8">
    <source>
        <dbReference type="PDB" id="2UV8"/>
    </source>
</evidence>
<evidence type="ECO:0007829" key="9">
    <source>
        <dbReference type="PDB" id="6U5T"/>
    </source>
</evidence>
<evidence type="ECO:0007829" key="10">
    <source>
        <dbReference type="PDB" id="6U5U"/>
    </source>
</evidence>
<evidence type="ECO:0007829" key="11">
    <source>
        <dbReference type="PDB" id="8PRV"/>
    </source>
</evidence>
<evidence type="ECO:0007829" key="12">
    <source>
        <dbReference type="PDB" id="8PSF"/>
    </source>
</evidence>
<evidence type="ECO:0007829" key="13">
    <source>
        <dbReference type="PDB" id="8PSK"/>
    </source>
</evidence>